<proteinExistence type="inferred from homology"/>
<sequence>MTREFIMLMMPPLTDGFPLDILVANVVACFLLGTVTALYARKIHSRDVHTIIGMGMMGGVSTFSSFAYGSVVLASASMSAFLIAAAYVTVSVVAGYVAVLAGMKFGEKSADILHRYPPMASIIDSGLVTVESRHSVAETIERVAAKAKSMGMNVFTRVDHGAGAKEAGLGLPPTELIIFGNPQNGTVLMQDKRTIGLDLPIRALAWEDGSGKVWLTVNDPAWLAQRHSLGLSSDVAIKAMVTGTGTVTKYAAGD</sequence>
<accession>Q8FZV1</accession>
<accession>G0KB54</accession>
<feature type="chain" id="PRO_0000110075" description="Fluoride-specific ion channel FluC 1">
    <location>
        <begin position="1"/>
        <end position="254"/>
    </location>
</feature>
<feature type="transmembrane region" description="Helical" evidence="1">
    <location>
        <begin position="19"/>
        <end position="39"/>
    </location>
</feature>
<feature type="transmembrane region" description="Helical" evidence="1">
    <location>
        <begin position="51"/>
        <end position="71"/>
    </location>
</feature>
<feature type="transmembrane region" description="Helical" evidence="1">
    <location>
        <begin position="80"/>
        <end position="100"/>
    </location>
</feature>
<feature type="binding site" evidence="1">
    <location>
        <position position="58"/>
    </location>
    <ligand>
        <name>Na(+)</name>
        <dbReference type="ChEBI" id="CHEBI:29101"/>
        <note>structural</note>
    </ligand>
</feature>
<feature type="binding site" evidence="1">
    <location>
        <position position="61"/>
    </location>
    <ligand>
        <name>Na(+)</name>
        <dbReference type="ChEBI" id="CHEBI:29101"/>
        <note>structural</note>
    </ligand>
</feature>
<dbReference type="EMBL" id="AE014291">
    <property type="protein sequence ID" value="AAN30283.1"/>
    <property type="molecule type" value="Genomic_DNA"/>
</dbReference>
<dbReference type="EMBL" id="CP002997">
    <property type="protein sequence ID" value="AEM18700.1"/>
    <property type="molecule type" value="Genomic_DNA"/>
</dbReference>
<dbReference type="SMR" id="Q8FZV1"/>
<dbReference type="KEGG" id="bms:BR1369"/>
<dbReference type="KEGG" id="bsi:BS1330_I1364"/>
<dbReference type="HOGENOM" id="CLU_1029234_0_0_5"/>
<dbReference type="Proteomes" id="UP000007104">
    <property type="component" value="Chromosome I"/>
</dbReference>
<dbReference type="GO" id="GO:0005886">
    <property type="term" value="C:plasma membrane"/>
    <property type="evidence" value="ECO:0007669"/>
    <property type="project" value="UniProtKB-SubCell"/>
</dbReference>
<dbReference type="GO" id="GO:0062054">
    <property type="term" value="F:fluoride channel activity"/>
    <property type="evidence" value="ECO:0007669"/>
    <property type="project" value="UniProtKB-UniRule"/>
</dbReference>
<dbReference type="GO" id="GO:0046872">
    <property type="term" value="F:metal ion binding"/>
    <property type="evidence" value="ECO:0007669"/>
    <property type="project" value="UniProtKB-KW"/>
</dbReference>
<dbReference type="GO" id="GO:0140114">
    <property type="term" value="P:cellular detoxification of fluoride"/>
    <property type="evidence" value="ECO:0007669"/>
    <property type="project" value="UniProtKB-UniRule"/>
</dbReference>
<dbReference type="CDD" id="cd14797">
    <property type="entry name" value="DUF302"/>
    <property type="match status" value="1"/>
</dbReference>
<dbReference type="Gene3D" id="3.30.310.70">
    <property type="entry name" value="TT1751-like domain"/>
    <property type="match status" value="1"/>
</dbReference>
<dbReference type="HAMAP" id="MF_00454">
    <property type="entry name" value="FluC"/>
    <property type="match status" value="1"/>
</dbReference>
<dbReference type="InterPro" id="IPR005180">
    <property type="entry name" value="DUF302"/>
</dbReference>
<dbReference type="InterPro" id="IPR003691">
    <property type="entry name" value="FluC"/>
</dbReference>
<dbReference type="InterPro" id="IPR035923">
    <property type="entry name" value="TT1751-like_sf"/>
</dbReference>
<dbReference type="NCBIfam" id="NF002454">
    <property type="entry name" value="PRK01636.1-2"/>
    <property type="match status" value="1"/>
</dbReference>
<dbReference type="PANTHER" id="PTHR38342:SF2">
    <property type="entry name" value="INNER MEMBRANE OR EXPORTED"/>
    <property type="match status" value="1"/>
</dbReference>
<dbReference type="PANTHER" id="PTHR38342">
    <property type="entry name" value="SLR5037 PROTEIN"/>
    <property type="match status" value="1"/>
</dbReference>
<dbReference type="Pfam" id="PF02537">
    <property type="entry name" value="CRCB"/>
    <property type="match status" value="1"/>
</dbReference>
<dbReference type="Pfam" id="PF03625">
    <property type="entry name" value="DUF302"/>
    <property type="match status" value="1"/>
</dbReference>
<dbReference type="SUPFAM" id="SSF103247">
    <property type="entry name" value="TT1751-like"/>
    <property type="match status" value="1"/>
</dbReference>
<reference key="1">
    <citation type="journal article" date="2002" name="Proc. Natl. Acad. Sci. U.S.A.">
        <title>The Brucella suis genome reveals fundamental similarities between animal and plant pathogens and symbionts.</title>
        <authorList>
            <person name="Paulsen I.T."/>
            <person name="Seshadri R."/>
            <person name="Nelson K.E."/>
            <person name="Eisen J.A."/>
            <person name="Heidelberg J.F."/>
            <person name="Read T.D."/>
            <person name="Dodson R.J."/>
            <person name="Umayam L.A."/>
            <person name="Brinkac L.M."/>
            <person name="Beanan M.J."/>
            <person name="Daugherty S.C."/>
            <person name="DeBoy R.T."/>
            <person name="Durkin A.S."/>
            <person name="Kolonay J.F."/>
            <person name="Madupu R."/>
            <person name="Nelson W.C."/>
            <person name="Ayodeji B."/>
            <person name="Kraul M."/>
            <person name="Shetty J."/>
            <person name="Malek J.A."/>
            <person name="Van Aken S.E."/>
            <person name="Riedmuller S."/>
            <person name="Tettelin H."/>
            <person name="Gill S.R."/>
            <person name="White O."/>
            <person name="Salzberg S.L."/>
            <person name="Hoover D.L."/>
            <person name="Lindler L.E."/>
            <person name="Halling S.M."/>
            <person name="Boyle S.M."/>
            <person name="Fraser C.M."/>
        </authorList>
    </citation>
    <scope>NUCLEOTIDE SEQUENCE [LARGE SCALE GENOMIC DNA]</scope>
    <source>
        <strain>1330</strain>
    </source>
</reference>
<reference key="2">
    <citation type="journal article" date="2011" name="J. Bacteriol.">
        <title>Revised genome sequence of Brucella suis 1330.</title>
        <authorList>
            <person name="Tae H."/>
            <person name="Shallom S."/>
            <person name="Settlage R."/>
            <person name="Preston D."/>
            <person name="Adams L.G."/>
            <person name="Garner H.R."/>
        </authorList>
    </citation>
    <scope>NUCLEOTIDE SEQUENCE [LARGE SCALE GENOMIC DNA]</scope>
    <source>
        <strain>1330</strain>
    </source>
</reference>
<name>FLUC1_BRUSU</name>
<gene>
    <name evidence="1" type="primary">fluC1</name>
    <name evidence="1" type="synonym">crcB1</name>
    <name type="ordered locus">BR1369</name>
    <name type="ordered locus">BS1330_I1364</name>
</gene>
<comment type="function">
    <text evidence="1">Fluoride-specific ion channel. Important for reducing fluoride concentration in the cell, thus reducing its toxicity.</text>
</comment>
<comment type="catalytic activity">
    <reaction evidence="1">
        <text>fluoride(in) = fluoride(out)</text>
        <dbReference type="Rhea" id="RHEA:76159"/>
        <dbReference type="ChEBI" id="CHEBI:17051"/>
    </reaction>
    <physiologicalReaction direction="left-to-right" evidence="1">
        <dbReference type="Rhea" id="RHEA:76160"/>
    </physiologicalReaction>
</comment>
<comment type="activity regulation">
    <text evidence="1">Na(+) is not transported, but it plays an essential structural role and its presence is essential for fluoride channel function.</text>
</comment>
<comment type="subcellular location">
    <subcellularLocation>
        <location evidence="1">Cell inner membrane</location>
        <topology evidence="1">Multi-pass membrane protein</topology>
    </subcellularLocation>
</comment>
<comment type="similarity">
    <text evidence="1">Belongs to the fluoride channel Fluc/FEX (TC 1.A.43) family.</text>
</comment>
<protein>
    <recommendedName>
        <fullName evidence="1">Fluoride-specific ion channel FluC 1</fullName>
    </recommendedName>
</protein>
<evidence type="ECO:0000255" key="1">
    <source>
        <dbReference type="HAMAP-Rule" id="MF_00454"/>
    </source>
</evidence>
<keyword id="KW-0997">Cell inner membrane</keyword>
<keyword id="KW-1003">Cell membrane</keyword>
<keyword id="KW-0407">Ion channel</keyword>
<keyword id="KW-0406">Ion transport</keyword>
<keyword id="KW-0472">Membrane</keyword>
<keyword id="KW-0479">Metal-binding</keyword>
<keyword id="KW-0915">Sodium</keyword>
<keyword id="KW-0812">Transmembrane</keyword>
<keyword id="KW-1133">Transmembrane helix</keyword>
<keyword id="KW-0813">Transport</keyword>
<organism>
    <name type="scientific">Brucella suis biovar 1 (strain 1330)</name>
    <dbReference type="NCBI Taxonomy" id="204722"/>
    <lineage>
        <taxon>Bacteria</taxon>
        <taxon>Pseudomonadati</taxon>
        <taxon>Pseudomonadota</taxon>
        <taxon>Alphaproteobacteria</taxon>
        <taxon>Hyphomicrobiales</taxon>
        <taxon>Brucellaceae</taxon>
        <taxon>Brucella/Ochrobactrum group</taxon>
        <taxon>Brucella</taxon>
    </lineage>
</organism>